<evidence type="ECO:0000250" key="1"/>
<evidence type="ECO:0000305" key="2"/>
<organism>
    <name type="scientific">Clostridium perfringens (strain 13 / Type A)</name>
    <dbReference type="NCBI Taxonomy" id="195102"/>
    <lineage>
        <taxon>Bacteria</taxon>
        <taxon>Bacillati</taxon>
        <taxon>Bacillota</taxon>
        <taxon>Clostridia</taxon>
        <taxon>Eubacteriales</taxon>
        <taxon>Clostridiaceae</taxon>
        <taxon>Clostridium</taxon>
    </lineage>
</organism>
<gene>
    <name type="primary">buk</name>
    <name type="synonym">bukA</name>
    <name type="ordered locus">CPE2347</name>
</gene>
<accession>P0C2D8</accession>
<accession>Q9ZNE5</accession>
<feature type="chain" id="PRO_0000107660" description="Butyrate kinase">
    <location>
        <begin position="1"/>
        <end position="356"/>
    </location>
</feature>
<sequence>MAYKLLIINPGSTSTKIGVYEGEKEVLEETLRHSAEEILKYATIFDQLDFRKEVILKVLKEKGIDINELDAVVGRGGMLKPIEGGTYEVNEAMVEDLKIGVQGPHASNLGGILSNEIAKEIGKRAFIVDPVVVDEMEDVARLSGVPELPRKSKFHALNQKAVAKRYAKEHNTSYEDVNLIVVHMGGGVSVGAHRKGRVIDVNNALDGDGPFSPERAGGVPSGELLEMCFSGKYSKEEVYKKLVGKGGFVAYANTNDARDLIKLSQEGDEKGSLIFNAFIYQIAKEIGSMAVVLDGEVDAIVLTGGIAYSDYVTNAINKKVKWIAPMVVYGGEDELLALAQGAIRVLDGVEEAKIYK</sequence>
<dbReference type="EC" id="2.7.2.7"/>
<dbReference type="EMBL" id="BA000016">
    <property type="protein sequence ID" value="BAB82053.1"/>
    <property type="molecule type" value="Genomic_DNA"/>
</dbReference>
<dbReference type="RefSeq" id="WP_011010889.1">
    <property type="nucleotide sequence ID" value="NC_003366.1"/>
</dbReference>
<dbReference type="SMR" id="P0C2D8"/>
<dbReference type="STRING" id="195102.gene:10491664"/>
<dbReference type="KEGG" id="cpe:CPE2347"/>
<dbReference type="HOGENOM" id="CLU_048716_0_0_9"/>
<dbReference type="UniPathway" id="UPA00863"/>
<dbReference type="Proteomes" id="UP000000818">
    <property type="component" value="Chromosome"/>
</dbReference>
<dbReference type="GO" id="GO:0005737">
    <property type="term" value="C:cytoplasm"/>
    <property type="evidence" value="ECO:0007669"/>
    <property type="project" value="UniProtKB-SubCell"/>
</dbReference>
<dbReference type="GO" id="GO:0008776">
    <property type="term" value="F:acetate kinase activity"/>
    <property type="evidence" value="ECO:0007669"/>
    <property type="project" value="TreeGrafter"/>
</dbReference>
<dbReference type="GO" id="GO:0005524">
    <property type="term" value="F:ATP binding"/>
    <property type="evidence" value="ECO:0007669"/>
    <property type="project" value="UniProtKB-KW"/>
</dbReference>
<dbReference type="GO" id="GO:0047761">
    <property type="term" value="F:butyrate kinase activity"/>
    <property type="evidence" value="ECO:0007669"/>
    <property type="project" value="UniProtKB-UniRule"/>
</dbReference>
<dbReference type="GO" id="GO:0006083">
    <property type="term" value="P:acetate metabolic process"/>
    <property type="evidence" value="ECO:0007669"/>
    <property type="project" value="TreeGrafter"/>
</dbReference>
<dbReference type="GO" id="GO:0019605">
    <property type="term" value="P:butyrate metabolic process"/>
    <property type="evidence" value="ECO:0007669"/>
    <property type="project" value="UniProtKB-UniPathway"/>
</dbReference>
<dbReference type="CDD" id="cd24011">
    <property type="entry name" value="ASKHA_NBD_BK"/>
    <property type="match status" value="1"/>
</dbReference>
<dbReference type="Gene3D" id="3.30.420.40">
    <property type="match status" value="2"/>
</dbReference>
<dbReference type="HAMAP" id="MF_00542">
    <property type="entry name" value="Butyrate_kinase"/>
    <property type="match status" value="1"/>
</dbReference>
<dbReference type="InterPro" id="IPR000890">
    <property type="entry name" value="Aliphatic_acid_kin_short-chain"/>
</dbReference>
<dbReference type="InterPro" id="IPR023865">
    <property type="entry name" value="Aliphatic_acid_kinase_CS"/>
</dbReference>
<dbReference type="InterPro" id="IPR043129">
    <property type="entry name" value="ATPase_NBD"/>
</dbReference>
<dbReference type="InterPro" id="IPR011245">
    <property type="entry name" value="Butyrate_kin"/>
</dbReference>
<dbReference type="NCBIfam" id="TIGR02707">
    <property type="entry name" value="butyr_kinase"/>
    <property type="match status" value="1"/>
</dbReference>
<dbReference type="NCBIfam" id="NF002834">
    <property type="entry name" value="PRK03011.1-5"/>
    <property type="match status" value="1"/>
</dbReference>
<dbReference type="PANTHER" id="PTHR21060">
    <property type="entry name" value="ACETATE KINASE"/>
    <property type="match status" value="1"/>
</dbReference>
<dbReference type="PANTHER" id="PTHR21060:SF3">
    <property type="entry name" value="BUTYRATE KINASE 2-RELATED"/>
    <property type="match status" value="1"/>
</dbReference>
<dbReference type="Pfam" id="PF00871">
    <property type="entry name" value="Acetate_kinase"/>
    <property type="match status" value="1"/>
</dbReference>
<dbReference type="PIRSF" id="PIRSF036458">
    <property type="entry name" value="Butyrate_kin"/>
    <property type="match status" value="1"/>
</dbReference>
<dbReference type="PRINTS" id="PR00471">
    <property type="entry name" value="ACETATEKNASE"/>
</dbReference>
<dbReference type="SUPFAM" id="SSF53067">
    <property type="entry name" value="Actin-like ATPase domain"/>
    <property type="match status" value="2"/>
</dbReference>
<dbReference type="PROSITE" id="PS01075">
    <property type="entry name" value="ACETATE_KINASE_1"/>
    <property type="match status" value="1"/>
</dbReference>
<dbReference type="PROSITE" id="PS01076">
    <property type="entry name" value="ACETATE_KINASE_2"/>
    <property type="match status" value="1"/>
</dbReference>
<name>BUK_CLOPE</name>
<comment type="function">
    <text evidence="1">Catalyzes the conversion of butyryl-CoA through butyryl phosphate to butyrate.</text>
</comment>
<comment type="catalytic activity">
    <reaction>
        <text>butanoate + ATP = butanoyl phosphate + ADP</text>
        <dbReference type="Rhea" id="RHEA:13585"/>
        <dbReference type="ChEBI" id="CHEBI:17968"/>
        <dbReference type="ChEBI" id="CHEBI:30616"/>
        <dbReference type="ChEBI" id="CHEBI:58079"/>
        <dbReference type="ChEBI" id="CHEBI:456216"/>
        <dbReference type="EC" id="2.7.2.7"/>
    </reaction>
</comment>
<comment type="pathway">
    <text>Lipid metabolism; butanoate metabolism.</text>
</comment>
<comment type="subcellular location">
    <subcellularLocation>
        <location evidence="1">Cytoplasm</location>
    </subcellularLocation>
</comment>
<comment type="similarity">
    <text evidence="2">Belongs to the acetokinase family.</text>
</comment>
<protein>
    <recommendedName>
        <fullName>Butyrate kinase</fullName>
        <shortName>BK</shortName>
        <ecNumber>2.7.2.7</ecNumber>
    </recommendedName>
</protein>
<reference key="1">
    <citation type="journal article" date="2002" name="Proc. Natl. Acad. Sci. U.S.A.">
        <title>Complete genome sequence of Clostridium perfringens, an anaerobic flesh-eater.</title>
        <authorList>
            <person name="Shimizu T."/>
            <person name="Ohtani K."/>
            <person name="Hirakawa H."/>
            <person name="Ohshima K."/>
            <person name="Yamashita A."/>
            <person name="Shiba T."/>
            <person name="Ogasawara N."/>
            <person name="Hattori M."/>
            <person name="Kuhara S."/>
            <person name="Hayashi H."/>
        </authorList>
    </citation>
    <scope>NUCLEOTIDE SEQUENCE [LARGE SCALE GENOMIC DNA]</scope>
    <source>
        <strain>13 / Type A</strain>
    </source>
</reference>
<proteinExistence type="inferred from homology"/>
<keyword id="KW-0067">ATP-binding</keyword>
<keyword id="KW-0963">Cytoplasm</keyword>
<keyword id="KW-0418">Kinase</keyword>
<keyword id="KW-0547">Nucleotide-binding</keyword>
<keyword id="KW-1185">Reference proteome</keyword>
<keyword id="KW-0808">Transferase</keyword>